<dbReference type="EMBL" id="CP000830">
    <property type="protein sequence ID" value="ABV93129.1"/>
    <property type="molecule type" value="Genomic_DNA"/>
</dbReference>
<dbReference type="RefSeq" id="WP_012178059.1">
    <property type="nucleotide sequence ID" value="NC_009952.1"/>
</dbReference>
<dbReference type="SMR" id="A8LJA7"/>
<dbReference type="STRING" id="398580.Dshi_1387"/>
<dbReference type="KEGG" id="dsh:Dshi_1387"/>
<dbReference type="eggNOG" id="COG1219">
    <property type="taxonomic scope" value="Bacteria"/>
</dbReference>
<dbReference type="HOGENOM" id="CLU_014218_8_2_5"/>
<dbReference type="OrthoDB" id="9804062at2"/>
<dbReference type="Proteomes" id="UP000006833">
    <property type="component" value="Chromosome"/>
</dbReference>
<dbReference type="GO" id="GO:0009376">
    <property type="term" value="C:HslUV protease complex"/>
    <property type="evidence" value="ECO:0007669"/>
    <property type="project" value="TreeGrafter"/>
</dbReference>
<dbReference type="GO" id="GO:0005524">
    <property type="term" value="F:ATP binding"/>
    <property type="evidence" value="ECO:0007669"/>
    <property type="project" value="UniProtKB-UniRule"/>
</dbReference>
<dbReference type="GO" id="GO:0016887">
    <property type="term" value="F:ATP hydrolysis activity"/>
    <property type="evidence" value="ECO:0007669"/>
    <property type="project" value="InterPro"/>
</dbReference>
<dbReference type="GO" id="GO:0140662">
    <property type="term" value="F:ATP-dependent protein folding chaperone"/>
    <property type="evidence" value="ECO:0007669"/>
    <property type="project" value="InterPro"/>
</dbReference>
<dbReference type="GO" id="GO:0046983">
    <property type="term" value="F:protein dimerization activity"/>
    <property type="evidence" value="ECO:0007669"/>
    <property type="project" value="InterPro"/>
</dbReference>
<dbReference type="GO" id="GO:0051082">
    <property type="term" value="F:unfolded protein binding"/>
    <property type="evidence" value="ECO:0007669"/>
    <property type="project" value="UniProtKB-UniRule"/>
</dbReference>
<dbReference type="GO" id="GO:0008270">
    <property type="term" value="F:zinc ion binding"/>
    <property type="evidence" value="ECO:0007669"/>
    <property type="project" value="InterPro"/>
</dbReference>
<dbReference type="GO" id="GO:0051301">
    <property type="term" value="P:cell division"/>
    <property type="evidence" value="ECO:0007669"/>
    <property type="project" value="TreeGrafter"/>
</dbReference>
<dbReference type="GO" id="GO:0051603">
    <property type="term" value="P:proteolysis involved in protein catabolic process"/>
    <property type="evidence" value="ECO:0007669"/>
    <property type="project" value="TreeGrafter"/>
</dbReference>
<dbReference type="CDD" id="cd19497">
    <property type="entry name" value="RecA-like_ClpX"/>
    <property type="match status" value="1"/>
</dbReference>
<dbReference type="FunFam" id="1.10.8.60:FF:000002">
    <property type="entry name" value="ATP-dependent Clp protease ATP-binding subunit ClpX"/>
    <property type="match status" value="1"/>
</dbReference>
<dbReference type="FunFam" id="3.40.50.300:FF:000005">
    <property type="entry name" value="ATP-dependent Clp protease ATP-binding subunit ClpX"/>
    <property type="match status" value="1"/>
</dbReference>
<dbReference type="Gene3D" id="1.10.8.60">
    <property type="match status" value="1"/>
</dbReference>
<dbReference type="Gene3D" id="6.20.220.10">
    <property type="entry name" value="ClpX chaperone, C4-type zinc finger domain"/>
    <property type="match status" value="1"/>
</dbReference>
<dbReference type="Gene3D" id="3.40.50.300">
    <property type="entry name" value="P-loop containing nucleotide triphosphate hydrolases"/>
    <property type="match status" value="1"/>
</dbReference>
<dbReference type="HAMAP" id="MF_00175">
    <property type="entry name" value="ClpX"/>
    <property type="match status" value="1"/>
</dbReference>
<dbReference type="InterPro" id="IPR003593">
    <property type="entry name" value="AAA+_ATPase"/>
</dbReference>
<dbReference type="InterPro" id="IPR050052">
    <property type="entry name" value="ATP-dep_Clp_protease_ClpX"/>
</dbReference>
<dbReference type="InterPro" id="IPR003959">
    <property type="entry name" value="ATPase_AAA_core"/>
</dbReference>
<dbReference type="InterPro" id="IPR019489">
    <property type="entry name" value="Clp_ATPase_C"/>
</dbReference>
<dbReference type="InterPro" id="IPR004487">
    <property type="entry name" value="Clp_protease_ATP-bd_su_ClpX"/>
</dbReference>
<dbReference type="InterPro" id="IPR046425">
    <property type="entry name" value="ClpX_bact"/>
</dbReference>
<dbReference type="InterPro" id="IPR027417">
    <property type="entry name" value="P-loop_NTPase"/>
</dbReference>
<dbReference type="InterPro" id="IPR010603">
    <property type="entry name" value="Znf_CppX_C4"/>
</dbReference>
<dbReference type="InterPro" id="IPR038366">
    <property type="entry name" value="Znf_CppX_C4_sf"/>
</dbReference>
<dbReference type="NCBIfam" id="TIGR00382">
    <property type="entry name" value="clpX"/>
    <property type="match status" value="1"/>
</dbReference>
<dbReference type="NCBIfam" id="NF003745">
    <property type="entry name" value="PRK05342.1"/>
    <property type="match status" value="1"/>
</dbReference>
<dbReference type="PANTHER" id="PTHR48102:SF7">
    <property type="entry name" value="ATP-DEPENDENT CLP PROTEASE ATP-BINDING SUBUNIT CLPX-LIKE, MITOCHONDRIAL"/>
    <property type="match status" value="1"/>
</dbReference>
<dbReference type="PANTHER" id="PTHR48102">
    <property type="entry name" value="ATP-DEPENDENT CLP PROTEASE ATP-BINDING SUBUNIT CLPX-LIKE, MITOCHONDRIAL-RELATED"/>
    <property type="match status" value="1"/>
</dbReference>
<dbReference type="Pfam" id="PF07724">
    <property type="entry name" value="AAA_2"/>
    <property type="match status" value="1"/>
</dbReference>
<dbReference type="Pfam" id="PF10431">
    <property type="entry name" value="ClpB_D2-small"/>
    <property type="match status" value="1"/>
</dbReference>
<dbReference type="Pfam" id="PF06689">
    <property type="entry name" value="zf-C4_ClpX"/>
    <property type="match status" value="1"/>
</dbReference>
<dbReference type="SMART" id="SM00382">
    <property type="entry name" value="AAA"/>
    <property type="match status" value="1"/>
</dbReference>
<dbReference type="SMART" id="SM01086">
    <property type="entry name" value="ClpB_D2-small"/>
    <property type="match status" value="1"/>
</dbReference>
<dbReference type="SMART" id="SM00994">
    <property type="entry name" value="zf-C4_ClpX"/>
    <property type="match status" value="1"/>
</dbReference>
<dbReference type="SUPFAM" id="SSF57716">
    <property type="entry name" value="Glucocorticoid receptor-like (DNA-binding domain)"/>
    <property type="match status" value="1"/>
</dbReference>
<dbReference type="SUPFAM" id="SSF52540">
    <property type="entry name" value="P-loop containing nucleoside triphosphate hydrolases"/>
    <property type="match status" value="1"/>
</dbReference>
<dbReference type="PROSITE" id="PS51902">
    <property type="entry name" value="CLPX_ZB"/>
    <property type="match status" value="1"/>
</dbReference>
<organism>
    <name type="scientific">Dinoroseobacter shibae (strain DSM 16493 / NCIMB 14021 / DFL 12)</name>
    <dbReference type="NCBI Taxonomy" id="398580"/>
    <lineage>
        <taxon>Bacteria</taxon>
        <taxon>Pseudomonadati</taxon>
        <taxon>Pseudomonadota</taxon>
        <taxon>Alphaproteobacteria</taxon>
        <taxon>Rhodobacterales</taxon>
        <taxon>Roseobacteraceae</taxon>
        <taxon>Dinoroseobacter</taxon>
    </lineage>
</organism>
<comment type="function">
    <text evidence="1">ATP-dependent specificity component of the Clp protease. It directs the protease to specific substrates. Can perform chaperone functions in the absence of ClpP.</text>
</comment>
<comment type="subunit">
    <text evidence="1">Component of the ClpX-ClpP complex. Forms a hexameric ring that, in the presence of ATP, binds to fourteen ClpP subunits assembled into a disk-like structure with a central cavity, resembling the structure of eukaryotic proteasomes.</text>
</comment>
<comment type="similarity">
    <text evidence="1">Belongs to the ClpX chaperone family.</text>
</comment>
<reference key="1">
    <citation type="journal article" date="2010" name="ISME J.">
        <title>The complete genome sequence of the algal symbiont Dinoroseobacter shibae: a hitchhiker's guide to life in the sea.</title>
        <authorList>
            <person name="Wagner-Dobler I."/>
            <person name="Ballhausen B."/>
            <person name="Berger M."/>
            <person name="Brinkhoff T."/>
            <person name="Buchholz I."/>
            <person name="Bunk B."/>
            <person name="Cypionka H."/>
            <person name="Daniel R."/>
            <person name="Drepper T."/>
            <person name="Gerdts G."/>
            <person name="Hahnke S."/>
            <person name="Han C."/>
            <person name="Jahn D."/>
            <person name="Kalhoefer D."/>
            <person name="Kiss H."/>
            <person name="Klenk H.P."/>
            <person name="Kyrpides N."/>
            <person name="Liebl W."/>
            <person name="Liesegang H."/>
            <person name="Meincke L."/>
            <person name="Pati A."/>
            <person name="Petersen J."/>
            <person name="Piekarski T."/>
            <person name="Pommerenke C."/>
            <person name="Pradella S."/>
            <person name="Pukall R."/>
            <person name="Rabus R."/>
            <person name="Stackebrandt E."/>
            <person name="Thole S."/>
            <person name="Thompson L."/>
            <person name="Tielen P."/>
            <person name="Tomasch J."/>
            <person name="von Jan M."/>
            <person name="Wanphrut N."/>
            <person name="Wichels A."/>
            <person name="Zech H."/>
            <person name="Simon M."/>
        </authorList>
    </citation>
    <scope>NUCLEOTIDE SEQUENCE [LARGE SCALE GENOMIC DNA]</scope>
    <source>
        <strain>DSM 16493 / NCIMB 14021 / DFL 12</strain>
    </source>
</reference>
<sequence length="419" mass="45615">MANNSGDSKNTLYCSFCGKSQHEVRKLIAGPTVFICDECVELCMDIIREETKSSGLKSSEGVPTPQEICDVLDDYVIGQSHAKRVLSVAVHNHYKRLNHAGKTDIELAKSNILLIGPTGCGKTLLAQTLARILDVPFTMADATTLTEAGYVGEDVENIILKLLQASEYNVERAQRGIVYIDEVDKITRKSDNPSITRDVSGEGVQQALLKIMEGTVASVPPQGGRKHPQQEFLQVDTTNILFICGGAFAGLEKIIAQRGKGSAIGFGADVKENDTRGVGEMFGELEPEDLLKFGLIPEFVGRLPVIATLTDLDEDALVTILTQPKNALVKQYQRLFELEDAQLTFTEDALNAIAGRAIERKTGARGLRSILEDILLNTMFDLPGLDNVDEVVVNEEVVSGDAQPLLIYAERKEEPATVG</sequence>
<gene>
    <name evidence="1" type="primary">clpX</name>
    <name type="ordered locus">Dshi_1387</name>
</gene>
<proteinExistence type="inferred from homology"/>
<evidence type="ECO:0000255" key="1">
    <source>
        <dbReference type="HAMAP-Rule" id="MF_00175"/>
    </source>
</evidence>
<evidence type="ECO:0000255" key="2">
    <source>
        <dbReference type="PROSITE-ProRule" id="PRU01250"/>
    </source>
</evidence>
<protein>
    <recommendedName>
        <fullName evidence="1">ATP-dependent Clp protease ATP-binding subunit ClpX</fullName>
    </recommendedName>
</protein>
<feature type="chain" id="PRO_1000077157" description="ATP-dependent Clp protease ATP-binding subunit ClpX">
    <location>
        <begin position="1"/>
        <end position="419"/>
    </location>
</feature>
<feature type="domain" description="ClpX-type ZB" evidence="2">
    <location>
        <begin position="2"/>
        <end position="55"/>
    </location>
</feature>
<feature type="binding site" evidence="2">
    <location>
        <position position="14"/>
    </location>
    <ligand>
        <name>Zn(2+)</name>
        <dbReference type="ChEBI" id="CHEBI:29105"/>
    </ligand>
</feature>
<feature type="binding site" evidence="2">
    <location>
        <position position="17"/>
    </location>
    <ligand>
        <name>Zn(2+)</name>
        <dbReference type="ChEBI" id="CHEBI:29105"/>
    </ligand>
</feature>
<feature type="binding site" evidence="2">
    <location>
        <position position="36"/>
    </location>
    <ligand>
        <name>Zn(2+)</name>
        <dbReference type="ChEBI" id="CHEBI:29105"/>
    </ligand>
</feature>
<feature type="binding site" evidence="2">
    <location>
        <position position="39"/>
    </location>
    <ligand>
        <name>Zn(2+)</name>
        <dbReference type="ChEBI" id="CHEBI:29105"/>
    </ligand>
</feature>
<feature type="binding site" evidence="1">
    <location>
        <begin position="117"/>
        <end position="124"/>
    </location>
    <ligand>
        <name>ATP</name>
        <dbReference type="ChEBI" id="CHEBI:30616"/>
    </ligand>
</feature>
<accession>A8LJA7</accession>
<keyword id="KW-0067">ATP-binding</keyword>
<keyword id="KW-0143">Chaperone</keyword>
<keyword id="KW-0479">Metal-binding</keyword>
<keyword id="KW-0547">Nucleotide-binding</keyword>
<keyword id="KW-1185">Reference proteome</keyword>
<keyword id="KW-0862">Zinc</keyword>
<name>CLPX_DINSH</name>